<accession>Q27084</accession>
<keyword id="KW-0002">3D-structure</keyword>
<keyword id="KW-0903">Direct protein sequencing</keyword>
<keyword id="KW-0391">Immunity</keyword>
<keyword id="KW-0399">Innate immunity</keyword>
<keyword id="KW-0430">Lectin</keyword>
<keyword id="KW-0677">Repeat</keyword>
<keyword id="KW-0964">Secreted</keyword>
<keyword id="KW-0732">Signal</keyword>
<keyword id="KW-0853">WD repeat</keyword>
<comment type="function">
    <text>Lectin that binds specifically to N-acetylglucosamine and N-acetylgalactosamine. Is part of the innate immunity host defense system of the horseshoe crab.</text>
</comment>
<comment type="subunit">
    <text>Monomer.</text>
</comment>
<comment type="subcellular location">
    <subcellularLocation>
        <location evidence="1">Secreted</location>
    </subcellularLocation>
    <subcellularLocation>
        <location evidence="1">Cytoplasmic granule</location>
    </subcellularLocation>
    <text>Stored in large secretory granules of hemocytes and secreted upon stimulation by lipopolysaccharides (LPS).</text>
</comment>
<protein>
    <recommendedName>
        <fullName>Tachylectin-2</fullName>
    </recommendedName>
    <alternativeName>
        <fullName>Lectin L10c</fullName>
    </alternativeName>
</protein>
<evidence type="ECO:0000269" key="1">
    <source>
    </source>
</evidence>
<evidence type="ECO:0007829" key="2">
    <source>
        <dbReference type="PDB" id="1TL2"/>
    </source>
</evidence>
<evidence type="ECO:0007829" key="3">
    <source>
        <dbReference type="PDB" id="3KIH"/>
    </source>
</evidence>
<name>TAL2_TACTR</name>
<dbReference type="EMBL" id="D45909">
    <property type="protein sequence ID" value="BAA08313.1"/>
    <property type="molecule type" value="mRNA"/>
</dbReference>
<dbReference type="PIR" id="PC1320">
    <property type="entry name" value="PC1320"/>
</dbReference>
<dbReference type="PDB" id="1TL2">
    <property type="method" value="X-ray"/>
    <property type="resolution" value="2.00 A"/>
    <property type="chains" value="A=20-255"/>
</dbReference>
<dbReference type="PDB" id="3KIF">
    <property type="method" value="X-ray"/>
    <property type="resolution" value="2.50 A"/>
    <property type="chains" value="A/B/C/D/E/F/G/H/I/J=83-186"/>
</dbReference>
<dbReference type="PDB" id="3KIH">
    <property type="method" value="X-ray"/>
    <property type="resolution" value="2.49 A"/>
    <property type="chains" value="A/B/C/D/E=57-152"/>
</dbReference>
<dbReference type="PDBsum" id="1TL2"/>
<dbReference type="PDBsum" id="3KIF"/>
<dbReference type="PDBsum" id="3KIH"/>
<dbReference type="SMR" id="Q27084"/>
<dbReference type="UniLectin" id="Q27084"/>
<dbReference type="EvolutionaryTrace" id="Q27084"/>
<dbReference type="GO" id="GO:0005576">
    <property type="term" value="C:extracellular region"/>
    <property type="evidence" value="ECO:0007669"/>
    <property type="project" value="UniProtKB-SubCell"/>
</dbReference>
<dbReference type="GO" id="GO:0030246">
    <property type="term" value="F:carbohydrate binding"/>
    <property type="evidence" value="ECO:0007669"/>
    <property type="project" value="UniProtKB-KW"/>
</dbReference>
<dbReference type="GO" id="GO:0045087">
    <property type="term" value="P:innate immune response"/>
    <property type="evidence" value="ECO:0007669"/>
    <property type="project" value="UniProtKB-KW"/>
</dbReference>
<dbReference type="Gene3D" id="2.115.10.10">
    <property type="entry name" value="Tachylectin 2"/>
    <property type="match status" value="1"/>
</dbReference>
<dbReference type="InterPro" id="IPR023294">
    <property type="entry name" value="Tachylectin2"/>
</dbReference>
<dbReference type="InterPro" id="IPR036813">
    <property type="entry name" value="Tachylectin2_sf"/>
</dbReference>
<dbReference type="Pfam" id="PF14517">
    <property type="entry name" value="Tachylectin"/>
    <property type="match status" value="1"/>
</dbReference>
<dbReference type="SUPFAM" id="SSF50934">
    <property type="entry name" value="Tachylectin-2"/>
    <property type="match status" value="1"/>
</dbReference>
<feature type="signal peptide">
    <location>
        <begin position="1"/>
        <end position="19"/>
    </location>
</feature>
<feature type="chain" id="PRO_0000041404" description="Tachylectin-2">
    <location>
        <begin position="20"/>
        <end position="255"/>
    </location>
</feature>
<feature type="repeat" description="WD 1">
    <location>
        <begin position="20"/>
        <end position="67"/>
    </location>
</feature>
<feature type="repeat" description="WD 2">
    <location>
        <begin position="68"/>
        <end position="114"/>
    </location>
</feature>
<feature type="repeat" description="WD 3">
    <location>
        <begin position="115"/>
        <end position="161"/>
    </location>
</feature>
<feature type="repeat" description="WD 4">
    <location>
        <begin position="162"/>
        <end position="208"/>
    </location>
</feature>
<feature type="repeat" description="WD 5">
    <location>
        <begin position="209"/>
        <end position="255"/>
    </location>
</feature>
<feature type="sequence variant" description="In L10A/B.">
    <original>I</original>
    <variation>V</variation>
    <location>
        <position position="148"/>
    </location>
</feature>
<feature type="sequence variant" description="In L10A/B.">
    <original>H</original>
    <variation>Y</variation>
    <location>
        <position position="232"/>
    </location>
</feature>
<feature type="strand" evidence="2">
    <location>
        <begin position="26"/>
        <end position="30"/>
    </location>
</feature>
<feature type="strand" evidence="2">
    <location>
        <begin position="33"/>
        <end position="38"/>
    </location>
</feature>
<feature type="helix" evidence="2">
    <location>
        <begin position="47"/>
        <end position="50"/>
    </location>
</feature>
<feature type="strand" evidence="2">
    <location>
        <begin position="51"/>
        <end position="58"/>
    </location>
</feature>
<feature type="helix" evidence="3">
    <location>
        <begin position="59"/>
        <end position="61"/>
    </location>
</feature>
<feature type="strand" evidence="2">
    <location>
        <begin position="63"/>
        <end position="67"/>
    </location>
</feature>
<feature type="strand" evidence="2">
    <location>
        <begin position="73"/>
        <end position="77"/>
    </location>
</feature>
<feature type="strand" evidence="2">
    <location>
        <begin position="80"/>
        <end position="85"/>
    </location>
</feature>
<feature type="helix" evidence="2">
    <location>
        <begin position="94"/>
        <end position="97"/>
    </location>
</feature>
<feature type="strand" evidence="2">
    <location>
        <begin position="99"/>
        <end position="102"/>
    </location>
</feature>
<feature type="helix" evidence="2">
    <location>
        <begin position="106"/>
        <end position="108"/>
    </location>
</feature>
<feature type="strand" evidence="2">
    <location>
        <begin position="110"/>
        <end position="114"/>
    </location>
</feature>
<feature type="strand" evidence="2">
    <location>
        <begin position="120"/>
        <end position="124"/>
    </location>
</feature>
<feature type="strand" evidence="2">
    <location>
        <begin position="127"/>
        <end position="132"/>
    </location>
</feature>
<feature type="helix" evidence="2">
    <location>
        <begin position="141"/>
        <end position="144"/>
    </location>
</feature>
<feature type="strand" evidence="2">
    <location>
        <begin position="145"/>
        <end position="149"/>
    </location>
</feature>
<feature type="helix" evidence="2">
    <location>
        <begin position="153"/>
        <end position="155"/>
    </location>
</feature>
<feature type="strand" evidence="2">
    <location>
        <begin position="156"/>
        <end position="161"/>
    </location>
</feature>
<feature type="strand" evidence="2">
    <location>
        <begin position="167"/>
        <end position="171"/>
    </location>
</feature>
<feature type="strand" evidence="2">
    <location>
        <begin position="174"/>
        <end position="178"/>
    </location>
</feature>
<feature type="helix" evidence="2">
    <location>
        <begin position="188"/>
        <end position="191"/>
    </location>
</feature>
<feature type="strand" evidence="2">
    <location>
        <begin position="193"/>
        <end position="199"/>
    </location>
</feature>
<feature type="helix" evidence="2">
    <location>
        <begin position="200"/>
        <end position="202"/>
    </location>
</feature>
<feature type="strand" evidence="2">
    <location>
        <begin position="203"/>
        <end position="208"/>
    </location>
</feature>
<feature type="strand" evidence="2">
    <location>
        <begin position="214"/>
        <end position="218"/>
    </location>
</feature>
<feature type="strand" evidence="2">
    <location>
        <begin position="221"/>
        <end position="226"/>
    </location>
</feature>
<feature type="helix" evidence="2">
    <location>
        <begin position="235"/>
        <end position="238"/>
    </location>
</feature>
<feature type="strand" evidence="2">
    <location>
        <begin position="240"/>
        <end position="246"/>
    </location>
</feature>
<feature type="helix" evidence="2">
    <location>
        <begin position="247"/>
        <end position="249"/>
    </location>
</feature>
<feature type="strand" evidence="2">
    <location>
        <begin position="250"/>
        <end position="254"/>
    </location>
</feature>
<reference key="1">
    <citation type="journal article" date="1995" name="J. Biol. Chem.">
        <title>Purification, characterization, and cDNA cloning of a 27-kDa lectin (L10) from horseshoe crab hemocytes.</title>
        <authorList>
            <person name="Okino N."/>
            <person name="Kawabata S."/>
            <person name="Saito T."/>
            <person name="Hirata M."/>
            <person name="Takagi T."/>
            <person name="Iwanaga S."/>
        </authorList>
    </citation>
    <scope>NUCLEOTIDE SEQUENCE [MRNA]</scope>
    <scope>PARTIAL PROTEIN SEQUENCE</scope>
    <scope>SUBCELLULAR LOCATION</scope>
</reference>
<reference key="2">
    <citation type="journal article" date="2002" name="Biochim. Biophys. Acta">
        <title>Molecular basis of non-self recognition by the horseshoe crab tachylectins.</title>
        <authorList>
            <person name="Kawabata S."/>
            <person name="Tsuda R."/>
        </authorList>
    </citation>
    <scope>DOMAINS WD REPEATS</scope>
</reference>
<reference key="3">
    <citation type="journal article" date="1999" name="EMBO J.">
        <title>Tachylectin-2: crystal structure of a specific GlcNAc/GalNAc-binding lectin involved in the innate immunity host defense of the Japanese horseshoe crab Tachypleus tridentatus.</title>
        <authorList>
            <person name="Beisel H.G."/>
            <person name="Kawabata S."/>
            <person name="Iwanaga S."/>
            <person name="Huber R."/>
            <person name="Bode W."/>
        </authorList>
    </citation>
    <scope>X-RAY CRYSTALLOGRAPHY (2.0 ANGSTROMS) OF 20-255</scope>
</reference>
<proteinExistence type="evidence at protein level"/>
<organism>
    <name type="scientific">Tachypleus tridentatus</name>
    <name type="common">Japanese horseshoe crab</name>
    <dbReference type="NCBI Taxonomy" id="6853"/>
    <lineage>
        <taxon>Eukaryota</taxon>
        <taxon>Metazoa</taxon>
        <taxon>Ecdysozoa</taxon>
        <taxon>Arthropoda</taxon>
        <taxon>Chelicerata</taxon>
        <taxon>Merostomata</taxon>
        <taxon>Xiphosura</taxon>
        <taxon>Limulidae</taxon>
        <taxon>Tachypleus</taxon>
    </lineage>
</organism>
<sequence>MKFLLVVLGFIGFLKDGITVGGESMLRGVYQDKFYQGTYPQNKNDNWLARATLIGKGGWSNFKFLFLSPGGELYGVLNDKIYKGTPPTHDNDNWMGRAKKIGNGGWNQFQFLFFDPNGYLYAVSKDKLYKASPPQSDTDNWIARATEIGSGGWSGFKFLFFHPNGYLYAVHGQQFYKALPPVSNQDNWLARATKIGQGGWDTFKFLFFSSVGTLFGVQGGKFYEDYPPSYAHDNWLARAKLIGNGGWDDFRFLFF</sequence>